<feature type="chain" id="PRO_0000277470" description="Alanyl-tRNA editing protein Aarsd1-B">
    <location>
        <begin position="1"/>
        <end position="412"/>
    </location>
</feature>
<feature type="binding site" evidence="2">
    <location>
        <position position="108"/>
    </location>
    <ligand>
        <name>Zn(2+)</name>
        <dbReference type="ChEBI" id="CHEBI:29105"/>
    </ligand>
</feature>
<feature type="binding site" evidence="2">
    <location>
        <position position="112"/>
    </location>
    <ligand>
        <name>Zn(2+)</name>
        <dbReference type="ChEBI" id="CHEBI:29105"/>
    </ligand>
</feature>
<feature type="binding site" evidence="2">
    <location>
        <position position="208"/>
    </location>
    <ligand>
        <name>Zn(2+)</name>
        <dbReference type="ChEBI" id="CHEBI:29105"/>
    </ligand>
</feature>
<feature type="binding site" evidence="2">
    <location>
        <position position="212"/>
    </location>
    <ligand>
        <name>Zn(2+)</name>
        <dbReference type="ChEBI" id="CHEBI:29105"/>
    </ligand>
</feature>
<protein>
    <recommendedName>
        <fullName>Alanyl-tRNA editing protein Aarsd1-B</fullName>
    </recommendedName>
    <alternativeName>
        <fullName>Alanyl-tRNA synthetase domain-containing protein 1-B</fullName>
    </alternativeName>
</protein>
<sequence length="412" mass="45744">MAFHCQRDCYATELLTEVVSCHPAQLKLENGGKKNTVSGFNVLLKDTVLFPEGGGQPDDRGFIGEVPVLRVIRQGPDAVHFVASPLDPATEVLVKIDWNRRFDHMQQHSGQHLVTAIADSLYGFKTTSWDLGRQRSVIELDTPLVTAEQVEAIEKVANQKIREHVPVHVRLITVDDPEFDMVRSRGLPDDHAGPVRIIDIEGVDANMCCGTHVRNLSDLQMIKILGTEKGKKNKTNLIFLSGERVLKYVSRSYNTEKTLTSLLKNGPEEHIEAVDKLQKSVKALQKNNLTLLRDLAVLTAENFKSKADRGKFFSLHRKEGDNEFMNIIANEIGTEDTLLFLTIGDEKTSGLFLLAGPPGIVEKFGPRVCEILDGKGAGKCGRFQGKANKMSQRAEVEVLLQKVISSVEITQE</sequence>
<evidence type="ECO:0000250" key="1"/>
<evidence type="ECO:0000255" key="2"/>
<evidence type="ECO:0000305" key="3"/>
<comment type="function">
    <text evidence="1">Functions in trans to edit the amino acid moiety from incorrectly charged tRNA(Ala).</text>
</comment>
<comment type="cofactor">
    <cofactor evidence="3">
        <name>Zn(2+)</name>
        <dbReference type="ChEBI" id="CHEBI:29105"/>
    </cofactor>
    <text evidence="3">Binds 1 zinc ion per subunit.</text>
</comment>
<comment type="subcellular location">
    <subcellularLocation>
        <location evidence="1">Cytoplasm</location>
    </subcellularLocation>
</comment>
<comment type="similarity">
    <text evidence="3">Belongs to the class-II aminoacyl-tRNA synthetase family. Alax-L subfamily.</text>
</comment>
<reference key="1">
    <citation type="submission" date="2003-01" db="EMBL/GenBank/DDBJ databases">
        <authorList>
            <consortium name="NIH - Xenopus Gene Collection (XGC) project"/>
        </authorList>
    </citation>
    <scope>NUCLEOTIDE SEQUENCE [LARGE SCALE MRNA]</scope>
    <source>
        <tissue>Embryo</tissue>
    </source>
</reference>
<accession>Q7ZYJ9</accession>
<name>AASDB_XENLA</name>
<organism>
    <name type="scientific">Xenopus laevis</name>
    <name type="common">African clawed frog</name>
    <dbReference type="NCBI Taxonomy" id="8355"/>
    <lineage>
        <taxon>Eukaryota</taxon>
        <taxon>Metazoa</taxon>
        <taxon>Chordata</taxon>
        <taxon>Craniata</taxon>
        <taxon>Vertebrata</taxon>
        <taxon>Euteleostomi</taxon>
        <taxon>Amphibia</taxon>
        <taxon>Batrachia</taxon>
        <taxon>Anura</taxon>
        <taxon>Pipoidea</taxon>
        <taxon>Pipidae</taxon>
        <taxon>Xenopodinae</taxon>
        <taxon>Xenopus</taxon>
        <taxon>Xenopus</taxon>
    </lineage>
</organism>
<proteinExistence type="evidence at transcript level"/>
<keyword id="KW-0963">Cytoplasm</keyword>
<keyword id="KW-0479">Metal-binding</keyword>
<keyword id="KW-0648">Protein biosynthesis</keyword>
<keyword id="KW-1185">Reference proteome</keyword>
<keyword id="KW-0862">Zinc</keyword>
<gene>
    <name type="primary">aarsd1-b</name>
</gene>
<dbReference type="EMBL" id="BC043754">
    <property type="protein sequence ID" value="AAH43754.1"/>
    <property type="molecule type" value="mRNA"/>
</dbReference>
<dbReference type="RefSeq" id="NP_001080266.1">
    <property type="nucleotide sequence ID" value="NM_001086797.1"/>
</dbReference>
<dbReference type="SMR" id="Q7ZYJ9"/>
<dbReference type="DNASU" id="379958"/>
<dbReference type="GeneID" id="379958"/>
<dbReference type="KEGG" id="xla:379958"/>
<dbReference type="AGR" id="Xenbase:XB-GENE-5787129"/>
<dbReference type="CTD" id="379958"/>
<dbReference type="Xenbase" id="XB-GENE-5787129">
    <property type="gene designation" value="aarsd1.L"/>
</dbReference>
<dbReference type="OrthoDB" id="288942at2759"/>
<dbReference type="Proteomes" id="UP000186698">
    <property type="component" value="Chromosome 9_10L"/>
</dbReference>
<dbReference type="Bgee" id="379958">
    <property type="expression patterns" value="Expressed in brain and 20 other cell types or tissues"/>
</dbReference>
<dbReference type="GO" id="GO:0005737">
    <property type="term" value="C:cytoplasm"/>
    <property type="evidence" value="ECO:0007669"/>
    <property type="project" value="UniProtKB-SubCell"/>
</dbReference>
<dbReference type="GO" id="GO:0004813">
    <property type="term" value="F:alanine-tRNA ligase activity"/>
    <property type="evidence" value="ECO:0007669"/>
    <property type="project" value="InterPro"/>
</dbReference>
<dbReference type="GO" id="GO:0005524">
    <property type="term" value="F:ATP binding"/>
    <property type="evidence" value="ECO:0007669"/>
    <property type="project" value="InterPro"/>
</dbReference>
<dbReference type="GO" id="GO:0046872">
    <property type="term" value="F:metal ion binding"/>
    <property type="evidence" value="ECO:0007669"/>
    <property type="project" value="UniProtKB-KW"/>
</dbReference>
<dbReference type="GO" id="GO:0003676">
    <property type="term" value="F:nucleic acid binding"/>
    <property type="evidence" value="ECO:0007669"/>
    <property type="project" value="InterPro"/>
</dbReference>
<dbReference type="GO" id="GO:0002196">
    <property type="term" value="F:Ser-tRNA(Ala) deacylase activity"/>
    <property type="evidence" value="ECO:0000318"/>
    <property type="project" value="GO_Central"/>
</dbReference>
<dbReference type="GO" id="GO:0006419">
    <property type="term" value="P:alanyl-tRNA aminoacylation"/>
    <property type="evidence" value="ECO:0007669"/>
    <property type="project" value="InterPro"/>
</dbReference>
<dbReference type="GO" id="GO:0006450">
    <property type="term" value="P:regulation of translational fidelity"/>
    <property type="evidence" value="ECO:0000318"/>
    <property type="project" value="GO_Central"/>
</dbReference>
<dbReference type="FunFam" id="2.40.30.130:FF:000003">
    <property type="entry name" value="alanyl-tRNA editing protein Aarsd1"/>
    <property type="match status" value="1"/>
</dbReference>
<dbReference type="FunFam" id="3.30.980.10:FF:000007">
    <property type="entry name" value="alanyl-tRNA editing protein Aarsd1"/>
    <property type="match status" value="1"/>
</dbReference>
<dbReference type="Gene3D" id="2.40.30.130">
    <property type="match status" value="1"/>
</dbReference>
<dbReference type="Gene3D" id="3.30.980.10">
    <property type="entry name" value="Threonyl-trna Synthetase, Chain A, domain 2"/>
    <property type="match status" value="1"/>
</dbReference>
<dbReference type="InterPro" id="IPR018165">
    <property type="entry name" value="Ala-tRNA-synth_IIc_core"/>
</dbReference>
<dbReference type="InterPro" id="IPR051335">
    <property type="entry name" value="Alanyl-tRNA_Editing_Enzymes"/>
</dbReference>
<dbReference type="InterPro" id="IPR018163">
    <property type="entry name" value="Thr/Ala-tRNA-synth_IIc_edit"/>
</dbReference>
<dbReference type="InterPro" id="IPR009000">
    <property type="entry name" value="Transl_B-barrel_sf"/>
</dbReference>
<dbReference type="InterPro" id="IPR012947">
    <property type="entry name" value="tRNA_SAD"/>
</dbReference>
<dbReference type="PANTHER" id="PTHR43462">
    <property type="entry name" value="ALANYL-TRNA EDITING PROTEIN"/>
    <property type="match status" value="1"/>
</dbReference>
<dbReference type="PANTHER" id="PTHR43462:SF1">
    <property type="entry name" value="ALANYL-TRNA EDITING PROTEIN AARSD1"/>
    <property type="match status" value="1"/>
</dbReference>
<dbReference type="Pfam" id="PF07973">
    <property type="entry name" value="tRNA_SAD"/>
    <property type="match status" value="1"/>
</dbReference>
<dbReference type="SMART" id="SM00863">
    <property type="entry name" value="tRNA_SAD"/>
    <property type="match status" value="1"/>
</dbReference>
<dbReference type="SUPFAM" id="SSF55186">
    <property type="entry name" value="ThrRS/AlaRS common domain"/>
    <property type="match status" value="1"/>
</dbReference>
<dbReference type="SUPFAM" id="SSF50447">
    <property type="entry name" value="Translation proteins"/>
    <property type="match status" value="1"/>
</dbReference>
<dbReference type="PROSITE" id="PS50860">
    <property type="entry name" value="AA_TRNA_LIGASE_II_ALA"/>
    <property type="match status" value="1"/>
</dbReference>